<protein>
    <recommendedName>
        <fullName evidence="1">UPF0340 protein SZO_02480</fullName>
    </recommendedName>
</protein>
<evidence type="ECO:0000255" key="1">
    <source>
        <dbReference type="HAMAP-Rule" id="MF_00800"/>
    </source>
</evidence>
<accession>C0MFQ4</accession>
<sequence length="186" mass="20057">MDLKVLREEARSILIDVVERSAIKKGQLFVLGLSSSEVLGGRIGQHSSLEVGEVIVKVVLEELSSRGIHLAVQGCEHINRALVLEESVAEEYQLELVNVLPSLHAGGSGQLAAFKYMKQPVEVEAIAAHAGLDIGDTSIGMHVKRVQVPLVPIQRELGGAHVTALASRPKLIGGVRARYQPDPIRK</sequence>
<reference key="1">
    <citation type="journal article" date="2009" name="PLoS Pathog.">
        <title>Genomic evidence for the evolution of Streptococcus equi: host restriction, increased virulence, and genetic exchange with human pathogens.</title>
        <authorList>
            <person name="Holden M.T.G."/>
            <person name="Heather Z."/>
            <person name="Paillot R."/>
            <person name="Steward K.F."/>
            <person name="Webb K."/>
            <person name="Ainslie F."/>
            <person name="Jourdan T."/>
            <person name="Bason N.C."/>
            <person name="Holroyd N.E."/>
            <person name="Mungall K."/>
            <person name="Quail M.A."/>
            <person name="Sanders M."/>
            <person name="Simmonds M."/>
            <person name="Willey D."/>
            <person name="Brooks K."/>
            <person name="Aanensen D.M."/>
            <person name="Spratt B.G."/>
            <person name="Jolley K.A."/>
            <person name="Maiden M.C.J."/>
            <person name="Kehoe M."/>
            <person name="Chanter N."/>
            <person name="Bentley S.D."/>
            <person name="Robinson C."/>
            <person name="Maskell D.J."/>
            <person name="Parkhill J."/>
            <person name="Waller A.S."/>
        </authorList>
    </citation>
    <scope>NUCLEOTIDE SEQUENCE [LARGE SCALE GENOMIC DNA]</scope>
    <source>
        <strain>H70</strain>
    </source>
</reference>
<gene>
    <name type="ordered locus">SZO_02480</name>
</gene>
<organism>
    <name type="scientific">Streptococcus equi subsp. zooepidemicus (strain H70)</name>
    <dbReference type="NCBI Taxonomy" id="553483"/>
    <lineage>
        <taxon>Bacteria</taxon>
        <taxon>Bacillati</taxon>
        <taxon>Bacillota</taxon>
        <taxon>Bacilli</taxon>
        <taxon>Lactobacillales</taxon>
        <taxon>Streptococcaceae</taxon>
        <taxon>Streptococcus</taxon>
    </lineage>
</organism>
<proteinExistence type="inferred from homology"/>
<feature type="chain" id="PRO_1000212969" description="UPF0340 protein SZO_02480">
    <location>
        <begin position="1"/>
        <end position="186"/>
    </location>
</feature>
<comment type="similarity">
    <text evidence="1">Belongs to the UPF0340 family.</text>
</comment>
<name>Y248_STRS7</name>
<dbReference type="EMBL" id="FM204884">
    <property type="protein sequence ID" value="CAW98006.1"/>
    <property type="molecule type" value="Genomic_DNA"/>
</dbReference>
<dbReference type="SMR" id="C0MFQ4"/>
<dbReference type="KEGG" id="seq:SZO_02480"/>
<dbReference type="eggNOG" id="COG4475">
    <property type="taxonomic scope" value="Bacteria"/>
</dbReference>
<dbReference type="HOGENOM" id="CLU_106658_0_0_9"/>
<dbReference type="Proteomes" id="UP000001368">
    <property type="component" value="Chromosome"/>
</dbReference>
<dbReference type="Gene3D" id="3.40.50.10360">
    <property type="entry name" value="Hypothetical protein TT1679"/>
    <property type="match status" value="1"/>
</dbReference>
<dbReference type="HAMAP" id="MF_00800">
    <property type="entry name" value="UPF0340"/>
    <property type="match status" value="1"/>
</dbReference>
<dbReference type="InterPro" id="IPR028345">
    <property type="entry name" value="Antibiotic_NAT-like"/>
</dbReference>
<dbReference type="InterPro" id="IPR006340">
    <property type="entry name" value="DUF436"/>
</dbReference>
<dbReference type="NCBIfam" id="TIGR01440">
    <property type="entry name" value="TIGR01440 family protein"/>
    <property type="match status" value="1"/>
</dbReference>
<dbReference type="Pfam" id="PF04260">
    <property type="entry name" value="DUF436"/>
    <property type="match status" value="1"/>
</dbReference>
<dbReference type="PIRSF" id="PIRSF007510">
    <property type="entry name" value="UCP007510"/>
    <property type="match status" value="1"/>
</dbReference>
<dbReference type="SUPFAM" id="SSF110710">
    <property type="entry name" value="TTHA0583/YokD-like"/>
    <property type="match status" value="1"/>
</dbReference>